<accession>Q60550</accession>
<comment type="function">
    <text evidence="2">Conjugation of reduced glutathione to a wide number of exogenous and endogenous hydrophobic electrophiles. Involved in the formation of glutathione conjugates of both prostaglandin A2 (PGA2) and prostaglandin J2 (PGJ2). Participates in the formation of novel hepoxilin regioisomers. Negatively regulates CDK5 activity via p25/p35 translocation to prevent neurodegeneration.</text>
</comment>
<comment type="catalytic activity">
    <reaction evidence="2">
        <text>RX + glutathione = an S-substituted glutathione + a halide anion + H(+)</text>
        <dbReference type="Rhea" id="RHEA:16437"/>
        <dbReference type="ChEBI" id="CHEBI:15378"/>
        <dbReference type="ChEBI" id="CHEBI:16042"/>
        <dbReference type="ChEBI" id="CHEBI:17792"/>
        <dbReference type="ChEBI" id="CHEBI:57925"/>
        <dbReference type="ChEBI" id="CHEBI:90779"/>
        <dbReference type="EC" id="2.5.1.18"/>
    </reaction>
    <physiologicalReaction direction="left-to-right" evidence="2">
        <dbReference type="Rhea" id="RHEA:16438"/>
    </physiologicalReaction>
</comment>
<comment type="catalytic activity">
    <reaction evidence="2">
        <text>prostaglandin J2 + glutathione = prostaglandin J2-S-(R)-glutathione</text>
        <dbReference type="Rhea" id="RHEA:50804"/>
        <dbReference type="ChEBI" id="CHEBI:57925"/>
        <dbReference type="ChEBI" id="CHEBI:133396"/>
        <dbReference type="ChEBI" id="CHEBI:133771"/>
    </reaction>
    <physiologicalReaction direction="left-to-right" evidence="2">
        <dbReference type="Rhea" id="RHEA:50805"/>
    </physiologicalReaction>
</comment>
<comment type="catalytic activity">
    <reaction evidence="2">
        <text>prostaglandin J2 + glutathione = prostaglandin J2-S-(S)-glutathione</text>
        <dbReference type="Rhea" id="RHEA:50808"/>
        <dbReference type="ChEBI" id="CHEBI:57925"/>
        <dbReference type="ChEBI" id="CHEBI:133396"/>
        <dbReference type="ChEBI" id="CHEBI:133772"/>
    </reaction>
    <physiologicalReaction direction="left-to-right" evidence="2">
        <dbReference type="Rhea" id="RHEA:50809"/>
    </physiologicalReaction>
</comment>
<comment type="catalytic activity">
    <reaction evidence="2">
        <text>prostaglandin A2 + glutathione = prostaglandin A2-S-(S)-glutathione</text>
        <dbReference type="Rhea" id="RHEA:50800"/>
        <dbReference type="ChEBI" id="CHEBI:57925"/>
        <dbReference type="ChEBI" id="CHEBI:133370"/>
        <dbReference type="ChEBI" id="CHEBI:133769"/>
    </reaction>
    <physiologicalReaction direction="left-to-right" evidence="2">
        <dbReference type="Rhea" id="RHEA:50801"/>
    </physiologicalReaction>
</comment>
<comment type="catalytic activity">
    <reaction evidence="2">
        <text>11(S)-hydroxy-14(S),15(S)-epoxy-(5Z,8Z,12E)-eicosatrienoate + glutathione = (11S,15S)-dihydroxy-14(R)-S-glutathionyl-(5Z,8Z,12E)-eicosatrienoate</text>
        <dbReference type="Rhea" id="RHEA:50260"/>
        <dbReference type="ChEBI" id="CHEBI:57925"/>
        <dbReference type="ChEBI" id="CHEBI:132200"/>
        <dbReference type="ChEBI" id="CHEBI:132201"/>
    </reaction>
    <physiologicalReaction direction="left-to-right" evidence="2">
        <dbReference type="Rhea" id="RHEA:50261"/>
    </physiologicalReaction>
</comment>
<comment type="subunit">
    <text evidence="1">Homodimer. Interacts with CDK5.</text>
</comment>
<comment type="subcellular location">
    <subcellularLocation>
        <location evidence="1">Cytoplasm</location>
    </subcellularLocation>
    <subcellularLocation>
        <location evidence="1">Mitochondrion</location>
    </subcellularLocation>
    <subcellularLocation>
        <location evidence="1">Nucleus</location>
    </subcellularLocation>
    <text evidence="1">The 83 N-terminal amino acids function as un uncleaved transit peptide, and arginine residues within it are crucial for mitochondrial localization.</text>
</comment>
<comment type="similarity">
    <text evidence="4">Belongs to the GST superfamily. Pi family.</text>
</comment>
<keyword id="KW-0007">Acetylation</keyword>
<keyword id="KW-0963">Cytoplasm</keyword>
<keyword id="KW-0443">Lipid metabolism</keyword>
<keyword id="KW-0496">Mitochondrion</keyword>
<keyword id="KW-0539">Nucleus</keyword>
<keyword id="KW-0597">Phosphoprotein</keyword>
<keyword id="KW-1185">Reference proteome</keyword>
<keyword id="KW-0808">Transferase</keyword>
<proteinExistence type="evidence at transcript level"/>
<sequence>MPPYTIVYFPVRGRCEAMRLLLADQGQSWKEEVVTGDSWVKGSLKSTCLYGQLPKFEDGDLILYQSNAILRHLGRSLGLYGKDQKEAALVDMANDGVEDLRCKYVTLIYTKYEEGKDDYVKALPGHLKPFETLLSQNQGGKAFIVGDQISFADYNLLDLLLIHQVLAPGCLDNFPLLSAYVARLSARPKIKAFLSSPDHVNRPINGNGKQ</sequence>
<dbReference type="EC" id="2.5.1.18" evidence="2"/>
<dbReference type="EMBL" id="L40382">
    <property type="protein sequence ID" value="AAB39860.1"/>
    <property type="molecule type" value="mRNA"/>
</dbReference>
<dbReference type="PIR" id="S71958">
    <property type="entry name" value="S71958"/>
</dbReference>
<dbReference type="RefSeq" id="NP_001268775.1">
    <property type="nucleotide sequence ID" value="NM_001281846.1"/>
</dbReference>
<dbReference type="SMR" id="Q60550"/>
<dbReference type="IntAct" id="Q60550">
    <property type="interactions" value="1"/>
</dbReference>
<dbReference type="STRING" id="10036.ENSMAUP00000019612"/>
<dbReference type="GeneID" id="101841030"/>
<dbReference type="KEGG" id="maua:101841030"/>
<dbReference type="CTD" id="2950"/>
<dbReference type="eggNOG" id="KOG1695">
    <property type="taxonomic scope" value="Eukaryota"/>
</dbReference>
<dbReference type="OrthoDB" id="4951845at2759"/>
<dbReference type="Proteomes" id="UP000189706">
    <property type="component" value="Unplaced"/>
</dbReference>
<dbReference type="GO" id="GO:0005829">
    <property type="term" value="C:cytosol"/>
    <property type="evidence" value="ECO:0007669"/>
    <property type="project" value="TreeGrafter"/>
</dbReference>
<dbReference type="GO" id="GO:0005739">
    <property type="term" value="C:mitochondrion"/>
    <property type="evidence" value="ECO:0007669"/>
    <property type="project" value="UniProtKB-SubCell"/>
</dbReference>
<dbReference type="GO" id="GO:0005634">
    <property type="term" value="C:nucleus"/>
    <property type="evidence" value="ECO:0007669"/>
    <property type="project" value="UniProtKB-SubCell"/>
</dbReference>
<dbReference type="GO" id="GO:0004364">
    <property type="term" value="F:glutathione transferase activity"/>
    <property type="evidence" value="ECO:0000250"/>
    <property type="project" value="UniProtKB"/>
</dbReference>
<dbReference type="GO" id="GO:1901687">
    <property type="term" value="P:glutathione derivative biosynthetic process"/>
    <property type="evidence" value="ECO:0000250"/>
    <property type="project" value="UniProtKB"/>
</dbReference>
<dbReference type="GO" id="GO:0006749">
    <property type="term" value="P:glutathione metabolic process"/>
    <property type="evidence" value="ECO:0000250"/>
    <property type="project" value="UniProtKB"/>
</dbReference>
<dbReference type="GO" id="GO:0051122">
    <property type="term" value="P:hepoxilin biosynthetic process"/>
    <property type="evidence" value="ECO:0000250"/>
    <property type="project" value="UniProtKB"/>
</dbReference>
<dbReference type="GO" id="GO:0006693">
    <property type="term" value="P:prostaglandin metabolic process"/>
    <property type="evidence" value="ECO:0000250"/>
    <property type="project" value="UniProtKB"/>
</dbReference>
<dbReference type="GO" id="GO:0006805">
    <property type="term" value="P:xenobiotic metabolic process"/>
    <property type="evidence" value="ECO:0000250"/>
    <property type="project" value="UniProtKB"/>
</dbReference>
<dbReference type="CDD" id="cd03210">
    <property type="entry name" value="GST_C_Pi"/>
    <property type="match status" value="1"/>
</dbReference>
<dbReference type="CDD" id="cd03076">
    <property type="entry name" value="GST_N_Pi"/>
    <property type="match status" value="1"/>
</dbReference>
<dbReference type="FunFam" id="1.20.1050.10:FF:000047">
    <property type="entry name" value="Glutathione S-transferase P"/>
    <property type="match status" value="1"/>
</dbReference>
<dbReference type="FunFam" id="3.40.30.10:FF:000071">
    <property type="entry name" value="Glutathione S-transferase P"/>
    <property type="match status" value="1"/>
</dbReference>
<dbReference type="Gene3D" id="1.20.1050.10">
    <property type="match status" value="1"/>
</dbReference>
<dbReference type="Gene3D" id="3.40.30.10">
    <property type="entry name" value="Glutaredoxin"/>
    <property type="match status" value="1"/>
</dbReference>
<dbReference type="InterPro" id="IPR010987">
    <property type="entry name" value="Glutathione-S-Trfase_C-like"/>
</dbReference>
<dbReference type="InterPro" id="IPR036282">
    <property type="entry name" value="Glutathione-S-Trfase_C_sf"/>
</dbReference>
<dbReference type="InterPro" id="IPR040079">
    <property type="entry name" value="Glutathione_S-Trfase"/>
</dbReference>
<dbReference type="InterPro" id="IPR004045">
    <property type="entry name" value="Glutathione_S-Trfase_N"/>
</dbReference>
<dbReference type="InterPro" id="IPR004046">
    <property type="entry name" value="GST_C"/>
</dbReference>
<dbReference type="InterPro" id="IPR003082">
    <property type="entry name" value="GST_pi"/>
</dbReference>
<dbReference type="InterPro" id="IPR050213">
    <property type="entry name" value="GST_superfamily"/>
</dbReference>
<dbReference type="InterPro" id="IPR036249">
    <property type="entry name" value="Thioredoxin-like_sf"/>
</dbReference>
<dbReference type="PANTHER" id="PTHR11571">
    <property type="entry name" value="GLUTATHIONE S-TRANSFERASE"/>
    <property type="match status" value="1"/>
</dbReference>
<dbReference type="PANTHER" id="PTHR11571:SF255">
    <property type="entry name" value="GLUTATHIONE S-TRANSFERASE P"/>
    <property type="match status" value="1"/>
</dbReference>
<dbReference type="Pfam" id="PF14497">
    <property type="entry name" value="GST_C_3"/>
    <property type="match status" value="1"/>
</dbReference>
<dbReference type="Pfam" id="PF02798">
    <property type="entry name" value="GST_N"/>
    <property type="match status" value="1"/>
</dbReference>
<dbReference type="PRINTS" id="PR01268">
    <property type="entry name" value="GSTRNSFRASEP"/>
</dbReference>
<dbReference type="SFLD" id="SFLDG01205">
    <property type="entry name" value="AMPS.1"/>
    <property type="match status" value="1"/>
</dbReference>
<dbReference type="SFLD" id="SFLDS00019">
    <property type="entry name" value="Glutathione_Transferase_(cytos"/>
    <property type="match status" value="1"/>
</dbReference>
<dbReference type="SUPFAM" id="SSF47616">
    <property type="entry name" value="GST C-terminal domain-like"/>
    <property type="match status" value="1"/>
</dbReference>
<dbReference type="SUPFAM" id="SSF52833">
    <property type="entry name" value="Thioredoxin-like"/>
    <property type="match status" value="1"/>
</dbReference>
<dbReference type="PROSITE" id="PS50405">
    <property type="entry name" value="GST_CTER"/>
    <property type="match status" value="1"/>
</dbReference>
<dbReference type="PROSITE" id="PS50404">
    <property type="entry name" value="GST_NTER"/>
    <property type="match status" value="1"/>
</dbReference>
<name>GSTP1_MESAU</name>
<gene>
    <name type="primary">GSTP1</name>
</gene>
<feature type="chain" id="PRO_0000185902" description="Glutathione S-transferase P">
    <location>
        <begin position="1"/>
        <end position="210"/>
    </location>
</feature>
<feature type="domain" description="GST N-terminal">
    <location>
        <begin position="2"/>
        <end position="81"/>
    </location>
</feature>
<feature type="domain" description="GST C-terminal">
    <location>
        <begin position="83"/>
        <end position="204"/>
    </location>
</feature>
<feature type="binding site" evidence="2">
    <location>
        <position position="8"/>
    </location>
    <ligand>
        <name>glutathione</name>
        <dbReference type="ChEBI" id="CHEBI:57925"/>
    </ligand>
</feature>
<feature type="binding site" evidence="2">
    <location>
        <position position="14"/>
    </location>
    <ligand>
        <name>glutathione</name>
        <dbReference type="ChEBI" id="CHEBI:57925"/>
    </ligand>
</feature>
<feature type="binding site" evidence="2">
    <location>
        <position position="39"/>
    </location>
    <ligand>
        <name>glutathione</name>
        <dbReference type="ChEBI" id="CHEBI:57925"/>
    </ligand>
</feature>
<feature type="binding site" evidence="2">
    <location>
        <position position="45"/>
    </location>
    <ligand>
        <name>glutathione</name>
        <dbReference type="ChEBI" id="CHEBI:57925"/>
    </ligand>
</feature>
<feature type="binding site" evidence="2">
    <location>
        <begin position="52"/>
        <end position="53"/>
    </location>
    <ligand>
        <name>glutathione</name>
        <dbReference type="ChEBI" id="CHEBI:57925"/>
    </ligand>
</feature>
<feature type="binding site" evidence="2">
    <location>
        <begin position="65"/>
        <end position="66"/>
    </location>
    <ligand>
        <name>glutathione</name>
        <dbReference type="ChEBI" id="CHEBI:57925"/>
    </ligand>
</feature>
<feature type="modified residue" description="Phosphotyrosine; by EGFR" evidence="2">
    <location>
        <position position="4"/>
    </location>
</feature>
<feature type="modified residue" description="N6-succinyllysine" evidence="3">
    <location>
        <position position="103"/>
    </location>
</feature>
<feature type="modified residue" description="N6-succinyllysine" evidence="3">
    <location>
        <position position="116"/>
    </location>
</feature>
<feature type="modified residue" description="N6-acetyllysine" evidence="2">
    <location>
        <position position="128"/>
    </location>
</feature>
<protein>
    <recommendedName>
        <fullName evidence="4">Glutathione S-transferase P</fullName>
        <ecNumber evidence="2">2.5.1.18</ecNumber>
    </recommendedName>
    <alternativeName>
        <fullName>GST class-pi</fullName>
    </alternativeName>
</protein>
<evidence type="ECO:0000250" key="1"/>
<evidence type="ECO:0000250" key="2">
    <source>
        <dbReference type="UniProtKB" id="P09211"/>
    </source>
</evidence>
<evidence type="ECO:0000250" key="3">
    <source>
        <dbReference type="UniProtKB" id="P19157"/>
    </source>
</evidence>
<evidence type="ECO:0000305" key="4"/>
<organism>
    <name type="scientific">Mesocricetus auratus</name>
    <name type="common">Golden hamster</name>
    <dbReference type="NCBI Taxonomy" id="10036"/>
    <lineage>
        <taxon>Eukaryota</taxon>
        <taxon>Metazoa</taxon>
        <taxon>Chordata</taxon>
        <taxon>Craniata</taxon>
        <taxon>Vertebrata</taxon>
        <taxon>Euteleostomi</taxon>
        <taxon>Mammalia</taxon>
        <taxon>Eutheria</taxon>
        <taxon>Euarchontoglires</taxon>
        <taxon>Glires</taxon>
        <taxon>Rodentia</taxon>
        <taxon>Myomorpha</taxon>
        <taxon>Muroidea</taxon>
        <taxon>Cricetidae</taxon>
        <taxon>Cricetinae</taxon>
        <taxon>Mesocricetus</taxon>
    </lineage>
</organism>
<reference key="1">
    <citation type="journal article" date="1996" name="Biochem. J.">
        <title>Comparison of the mRNA sequences for Pi class glutathione transferases in different hamster species and the corresponding enzyme activities with anti-benzo[a]pyrene-7,8-dihydrodiol 9,10-epoxide.</title>
        <authorList>
            <person name="Swedmark S."/>
            <person name="Jernstroem B."/>
            <person name="Jenssen D."/>
        </authorList>
    </citation>
    <scope>NUCLEOTIDE SEQUENCE [MRNA]</scope>
    <source>
        <tissue>Kidney</tissue>
    </source>
</reference>